<protein>
    <recommendedName>
        <fullName evidence="1">UDP-3-O-acylglucosamine N-acyltransferase</fullName>
        <ecNumber evidence="1">2.3.1.191</ecNumber>
    </recommendedName>
</protein>
<reference key="1">
    <citation type="journal article" date="2007" name="Photosyn. Res.">
        <title>Complete nucleotide sequence of the freshwater unicellular cyanobacterium Synechococcus elongatus PCC 6301 chromosome: gene content and organization.</title>
        <authorList>
            <person name="Sugita C."/>
            <person name="Ogata K."/>
            <person name="Shikata M."/>
            <person name="Jikuya H."/>
            <person name="Takano J."/>
            <person name="Furumichi M."/>
            <person name="Kanehisa M."/>
            <person name="Omata T."/>
            <person name="Sugiura M."/>
            <person name="Sugita M."/>
        </authorList>
    </citation>
    <scope>NUCLEOTIDE SEQUENCE [LARGE SCALE GENOMIC DNA]</scope>
    <source>
        <strain>ATCC 27144 / PCC 6301 / SAUG 1402/1</strain>
    </source>
</reference>
<organism>
    <name type="scientific">Synechococcus sp. (strain ATCC 27144 / PCC 6301 / SAUG 1402/1)</name>
    <name type="common">Anacystis nidulans</name>
    <dbReference type="NCBI Taxonomy" id="269084"/>
    <lineage>
        <taxon>Bacteria</taxon>
        <taxon>Bacillati</taxon>
        <taxon>Cyanobacteriota</taxon>
        <taxon>Cyanophyceae</taxon>
        <taxon>Synechococcales</taxon>
        <taxon>Synechococcaceae</taxon>
        <taxon>Synechococcus</taxon>
    </lineage>
</organism>
<evidence type="ECO:0000255" key="1">
    <source>
        <dbReference type="HAMAP-Rule" id="MF_00523"/>
    </source>
</evidence>
<dbReference type="EC" id="2.3.1.191" evidence="1"/>
<dbReference type="EMBL" id="AP008231">
    <property type="protein sequence ID" value="BAD78298.1"/>
    <property type="molecule type" value="Genomic_DNA"/>
</dbReference>
<dbReference type="RefSeq" id="WP_011242421.1">
    <property type="nucleotide sequence ID" value="NZ_CP085785.1"/>
</dbReference>
<dbReference type="SMR" id="Q5N5W9"/>
<dbReference type="GeneID" id="72430312"/>
<dbReference type="KEGG" id="syc:syc0108_d"/>
<dbReference type="eggNOG" id="COG1044">
    <property type="taxonomic scope" value="Bacteria"/>
</dbReference>
<dbReference type="UniPathway" id="UPA00973"/>
<dbReference type="Proteomes" id="UP000001175">
    <property type="component" value="Chromosome"/>
</dbReference>
<dbReference type="GO" id="GO:0031470">
    <property type="term" value="C:carboxysome"/>
    <property type="evidence" value="ECO:0007669"/>
    <property type="project" value="UniProtKB-ARBA"/>
</dbReference>
<dbReference type="GO" id="GO:0016020">
    <property type="term" value="C:membrane"/>
    <property type="evidence" value="ECO:0007669"/>
    <property type="project" value="GOC"/>
</dbReference>
<dbReference type="GO" id="GO:0016410">
    <property type="term" value="F:N-acyltransferase activity"/>
    <property type="evidence" value="ECO:0007669"/>
    <property type="project" value="InterPro"/>
</dbReference>
<dbReference type="GO" id="GO:0043886">
    <property type="term" value="F:structural constituent of carboxysome shell"/>
    <property type="evidence" value="ECO:0007669"/>
    <property type="project" value="UniProtKB-ARBA"/>
</dbReference>
<dbReference type="GO" id="GO:0009245">
    <property type="term" value="P:lipid A biosynthetic process"/>
    <property type="evidence" value="ECO:0007669"/>
    <property type="project" value="UniProtKB-UniRule"/>
</dbReference>
<dbReference type="CDD" id="cd03352">
    <property type="entry name" value="LbH_LpxD"/>
    <property type="match status" value="1"/>
</dbReference>
<dbReference type="Gene3D" id="2.160.10.10">
    <property type="entry name" value="Hexapeptide repeat proteins"/>
    <property type="match status" value="1"/>
</dbReference>
<dbReference type="Gene3D" id="3.40.1390.10">
    <property type="entry name" value="MurE/MurF, N-terminal domain"/>
    <property type="match status" value="1"/>
</dbReference>
<dbReference type="HAMAP" id="MF_00523">
    <property type="entry name" value="LpxD"/>
    <property type="match status" value="1"/>
</dbReference>
<dbReference type="InterPro" id="IPR001451">
    <property type="entry name" value="Hexapep"/>
</dbReference>
<dbReference type="InterPro" id="IPR007691">
    <property type="entry name" value="LpxD"/>
</dbReference>
<dbReference type="InterPro" id="IPR011004">
    <property type="entry name" value="Trimer_LpxA-like_sf"/>
</dbReference>
<dbReference type="InterPro" id="IPR020573">
    <property type="entry name" value="UDP_GlcNAc_AcTrfase_non-rep"/>
</dbReference>
<dbReference type="NCBIfam" id="TIGR01853">
    <property type="entry name" value="lipid_A_lpxD"/>
    <property type="match status" value="1"/>
</dbReference>
<dbReference type="NCBIfam" id="NF002060">
    <property type="entry name" value="PRK00892.1"/>
    <property type="match status" value="1"/>
</dbReference>
<dbReference type="PANTHER" id="PTHR43378">
    <property type="entry name" value="UDP-3-O-ACYLGLUCOSAMINE N-ACYLTRANSFERASE"/>
    <property type="match status" value="1"/>
</dbReference>
<dbReference type="PANTHER" id="PTHR43378:SF2">
    <property type="entry name" value="UDP-3-O-ACYLGLUCOSAMINE N-ACYLTRANSFERASE 1, MITOCHONDRIAL-RELATED"/>
    <property type="match status" value="1"/>
</dbReference>
<dbReference type="Pfam" id="PF00132">
    <property type="entry name" value="Hexapep"/>
    <property type="match status" value="1"/>
</dbReference>
<dbReference type="Pfam" id="PF04613">
    <property type="entry name" value="LpxD"/>
    <property type="match status" value="1"/>
</dbReference>
<dbReference type="SUPFAM" id="SSF51161">
    <property type="entry name" value="Trimeric LpxA-like enzymes"/>
    <property type="match status" value="1"/>
</dbReference>
<keyword id="KW-0012">Acyltransferase</keyword>
<keyword id="KW-0441">Lipid A biosynthesis</keyword>
<keyword id="KW-0444">Lipid biosynthesis</keyword>
<keyword id="KW-0443">Lipid metabolism</keyword>
<keyword id="KW-0677">Repeat</keyword>
<keyword id="KW-0808">Transferase</keyword>
<proteinExistence type="inferred from homology"/>
<name>LPXD_SYNP6</name>
<feature type="chain" id="PRO_0000264442" description="UDP-3-O-acylglucosamine N-acyltransferase">
    <location>
        <begin position="1"/>
        <end position="355"/>
    </location>
</feature>
<feature type="active site" description="Proton acceptor" evidence="1">
    <location>
        <position position="248"/>
    </location>
</feature>
<sequence length="355" mass="37469">MRWSEFLQHLEAKTGPCTAKAIAGDPELHGVAAINEAQSGQVSFLDQESGLQDWIEQTAASALILPPDPALQARAEARNLPWMTTAQPRLAFAAAIAVFYQPFRPVAGIHPSAVIDPSAQLGDRVSVGAHVVIGANCVIGNDVILHANVVLYPGVSLGDRCQIHANSTIHERSQIGQDCVIHSGAVIGAEGFGFVPTASGWFKMEQSGIVVLEDGVEVGCNSAIDRPAVGETRIGAQTKLDNLVHIGHGCQIGKACAMAAQVGLAGGVEVGDRVILAGQVGVANRVKIGDRAIASSKSGIHGEIEAGAIVSGYPAIPNRQWLKTSAVYNRLPELYRSLRNLIRRVEVLEQDRPSS</sequence>
<comment type="function">
    <text evidence="1">Catalyzes the N-acylation of UDP-3-O-acylglucosamine using 3-hydroxyacyl-ACP as the acyl donor. Is involved in the biosynthesis of lipid A, a phosphorylated glycolipid that anchors the lipopolysaccharide to the outer membrane of the cell.</text>
</comment>
<comment type="catalytic activity">
    <reaction evidence="1">
        <text>a UDP-3-O-[(3R)-3-hydroxyacyl]-alpha-D-glucosamine + a (3R)-hydroxyacyl-[ACP] = a UDP-2-N,3-O-bis[(3R)-3-hydroxyacyl]-alpha-D-glucosamine + holo-[ACP] + H(+)</text>
        <dbReference type="Rhea" id="RHEA:53836"/>
        <dbReference type="Rhea" id="RHEA-COMP:9685"/>
        <dbReference type="Rhea" id="RHEA-COMP:9945"/>
        <dbReference type="ChEBI" id="CHEBI:15378"/>
        <dbReference type="ChEBI" id="CHEBI:64479"/>
        <dbReference type="ChEBI" id="CHEBI:78827"/>
        <dbReference type="ChEBI" id="CHEBI:137740"/>
        <dbReference type="ChEBI" id="CHEBI:137748"/>
        <dbReference type="EC" id="2.3.1.191"/>
    </reaction>
</comment>
<comment type="pathway">
    <text evidence="1">Bacterial outer membrane biogenesis; LPS lipid A biosynthesis.</text>
</comment>
<comment type="subunit">
    <text evidence="1">Homotrimer.</text>
</comment>
<comment type="similarity">
    <text evidence="1">Belongs to the transferase hexapeptide repeat family. LpxD subfamily.</text>
</comment>
<accession>Q5N5W9</accession>
<gene>
    <name evidence="1" type="primary">lpxD</name>
    <name type="ordered locus">syc0108_d</name>
</gene>